<reference key="1">
    <citation type="submission" date="2005-03" db="EMBL/GenBank/DDBJ databases">
        <title>Annotation of the Saccharomyces cerevisiae RM11-1a genome.</title>
        <authorList>
            <consortium name="The Broad Institute Genome Sequencing Platform"/>
            <person name="Birren B.W."/>
            <person name="Lander E.S."/>
            <person name="Galagan J.E."/>
            <person name="Nusbaum C."/>
            <person name="Devon K."/>
            <person name="Cuomo C."/>
            <person name="Jaffe D.B."/>
            <person name="Butler J."/>
            <person name="Alvarez P."/>
            <person name="Gnerre S."/>
            <person name="Grabherr M."/>
            <person name="Kleber M."/>
            <person name="Mauceli E.W."/>
            <person name="Brockman W."/>
            <person name="MacCallum I.A."/>
            <person name="Rounsley S."/>
            <person name="Young S.K."/>
            <person name="LaButti K."/>
            <person name="Pushparaj V."/>
            <person name="DeCaprio D."/>
            <person name="Crawford M."/>
            <person name="Koehrsen M."/>
            <person name="Engels R."/>
            <person name="Montgomery P."/>
            <person name="Pearson M."/>
            <person name="Howarth C."/>
            <person name="Larson L."/>
            <person name="Luoma S."/>
            <person name="White J."/>
            <person name="O'Leary S."/>
            <person name="Kodira C.D."/>
            <person name="Zeng Q."/>
            <person name="Yandava C."/>
            <person name="Alvarado L."/>
            <person name="Pratt S."/>
            <person name="Kruglyak L."/>
        </authorList>
    </citation>
    <scope>NUCLEOTIDE SEQUENCE [LARGE SCALE GENOMIC DNA]</scope>
    <source>
        <strain>RM11-1a</strain>
    </source>
</reference>
<comment type="function">
    <text evidence="1">May be involved in vacuolar sorting and osmoregulation.</text>
</comment>
<comment type="cofactor">
    <cofactor evidence="2">
        <name>Zn(2+)</name>
        <dbReference type="ChEBI" id="CHEBI:29105"/>
    </cofactor>
    <text evidence="2">Binds 2 Zn(2+) ions per subunit.</text>
</comment>
<comment type="subcellular location">
    <subcellularLocation>
        <location evidence="1">Vacuole membrane</location>
        <topology evidence="3">Multi-pass membrane protein</topology>
    </subcellularLocation>
</comment>
<comment type="similarity">
    <text evidence="6">Belongs to the peptidase M28 family.</text>
</comment>
<feature type="chain" id="PRO_0000411750" description="Vacuolar membrane protease">
    <location>
        <begin position="1"/>
        <end position="976"/>
    </location>
</feature>
<feature type="topological domain" description="Cytoplasmic" evidence="1">
    <location>
        <begin position="1"/>
        <end position="15"/>
    </location>
</feature>
<feature type="transmembrane region" description="Helical; Name=1" evidence="3">
    <location>
        <begin position="16"/>
        <end position="36"/>
    </location>
</feature>
<feature type="topological domain" description="Vacuolar" evidence="1">
    <location>
        <begin position="37"/>
        <end position="359"/>
    </location>
</feature>
<feature type="transmembrane region" description="Helical; Name=2" evidence="3">
    <location>
        <begin position="360"/>
        <end position="380"/>
    </location>
</feature>
<feature type="topological domain" description="Cytoplasmic" evidence="1">
    <location>
        <begin position="381"/>
        <end position="392"/>
    </location>
</feature>
<feature type="transmembrane region" description="Helical; Name=3" evidence="3">
    <location>
        <begin position="393"/>
        <end position="412"/>
    </location>
</feature>
<feature type="topological domain" description="Vacuolar" evidence="1">
    <location>
        <begin position="413"/>
        <end position="428"/>
    </location>
</feature>
<feature type="transmembrane region" description="Helical; Name=4" evidence="3">
    <location>
        <begin position="429"/>
        <end position="449"/>
    </location>
</feature>
<feature type="topological domain" description="Cytoplasmic" evidence="1">
    <location>
        <begin position="450"/>
        <end position="461"/>
    </location>
</feature>
<feature type="transmembrane region" description="Helical; Name=5" evidence="3">
    <location>
        <begin position="462"/>
        <end position="482"/>
    </location>
</feature>
<feature type="topological domain" description="Vacuolar" evidence="1">
    <location>
        <begin position="483"/>
        <end position="496"/>
    </location>
</feature>
<feature type="transmembrane region" description="Helical; Name=6" evidence="3">
    <location>
        <begin position="497"/>
        <end position="517"/>
    </location>
</feature>
<feature type="topological domain" description="Cytoplasmic" evidence="1">
    <location>
        <begin position="518"/>
        <end position="627"/>
    </location>
</feature>
<feature type="transmembrane region" description="Helical; Name=7" evidence="3">
    <location>
        <begin position="628"/>
        <end position="648"/>
    </location>
</feature>
<feature type="topological domain" description="Vacuolar" evidence="1">
    <location>
        <begin position="649"/>
        <end position="668"/>
    </location>
</feature>
<feature type="transmembrane region" description="Helical; Name=8" evidence="3">
    <location>
        <begin position="669"/>
        <end position="689"/>
    </location>
</feature>
<feature type="topological domain" description="Cytoplasmic" evidence="1">
    <location>
        <begin position="690"/>
        <end position="692"/>
    </location>
</feature>
<feature type="transmembrane region" description="Helical; Name=9" evidence="3">
    <location>
        <begin position="693"/>
        <end position="713"/>
    </location>
</feature>
<feature type="topological domain" description="Vacuolar" evidence="1">
    <location>
        <begin position="714"/>
        <end position="976"/>
    </location>
</feature>
<feature type="region of interest" description="Disordered" evidence="5">
    <location>
        <begin position="528"/>
        <end position="610"/>
    </location>
</feature>
<feature type="compositionally biased region" description="Polar residues" evidence="5">
    <location>
        <begin position="549"/>
        <end position="558"/>
    </location>
</feature>
<feature type="compositionally biased region" description="Low complexity" evidence="5">
    <location>
        <begin position="559"/>
        <end position="570"/>
    </location>
</feature>
<feature type="compositionally biased region" description="Basic and acidic residues" evidence="5">
    <location>
        <begin position="582"/>
        <end position="601"/>
    </location>
</feature>
<feature type="active site" description="Proton acceptor" evidence="2">
    <location>
        <position position="200"/>
    </location>
</feature>
<feature type="binding site" evidence="2">
    <location>
        <position position="156"/>
    </location>
    <ligand>
        <name>Zn(2+)</name>
        <dbReference type="ChEBI" id="CHEBI:29105"/>
        <label>1</label>
        <note>catalytic</note>
    </ligand>
</feature>
<feature type="binding site" evidence="2">
    <location>
        <position position="168"/>
    </location>
    <ligand>
        <name>Zn(2+)</name>
        <dbReference type="ChEBI" id="CHEBI:29105"/>
        <label>1</label>
        <note>catalytic</note>
    </ligand>
</feature>
<feature type="binding site" evidence="2">
    <location>
        <position position="168"/>
    </location>
    <ligand>
        <name>Zn(2+)</name>
        <dbReference type="ChEBI" id="CHEBI:29105"/>
        <label>2</label>
        <note>catalytic</note>
    </ligand>
</feature>
<feature type="binding site" evidence="2">
    <location>
        <position position="201"/>
    </location>
    <ligand>
        <name>Zn(2+)</name>
        <dbReference type="ChEBI" id="CHEBI:29105"/>
        <label>2</label>
        <note>catalytic</note>
    </ligand>
</feature>
<feature type="binding site" evidence="2">
    <location>
        <position position="226"/>
    </location>
    <ligand>
        <name>Zn(2+)</name>
        <dbReference type="ChEBI" id="CHEBI:29105"/>
        <label>1</label>
        <note>catalytic</note>
    </ligand>
</feature>
<feature type="binding site" evidence="2">
    <location>
        <position position="300"/>
    </location>
    <ligand>
        <name>Zn(2+)</name>
        <dbReference type="ChEBI" id="CHEBI:29105"/>
        <label>2</label>
        <note>catalytic</note>
    </ligand>
</feature>
<feature type="site" description="Transition state stabilizer" evidence="2">
    <location>
        <position position="299"/>
    </location>
</feature>
<feature type="glycosylation site" description="N-linked (GlcNAc...) asparagine" evidence="4">
    <location>
        <position position="96"/>
    </location>
</feature>
<feature type="glycosylation site" description="N-linked (GlcNAc...) asparagine" evidence="4">
    <location>
        <position position="121"/>
    </location>
</feature>
<feature type="glycosylation site" description="N-linked (GlcNAc...) asparagine" evidence="4">
    <location>
        <position position="189"/>
    </location>
</feature>
<feature type="glycosylation site" description="N-linked (GlcNAc...) asparagine" evidence="4">
    <location>
        <position position="212"/>
    </location>
</feature>
<feature type="glycosylation site" description="N-linked (GlcNAc...) asparagine" evidence="4">
    <location>
        <position position="217"/>
    </location>
</feature>
<feature type="glycosylation site" description="N-linked (GlcNAc...) asparagine" evidence="4">
    <location>
        <position position="656"/>
    </location>
</feature>
<feature type="glycosylation site" description="N-linked (GlcNAc...) asparagine" evidence="4">
    <location>
        <position position="768"/>
    </location>
</feature>
<feature type="glycosylation site" description="N-linked (GlcNAc...) asparagine" evidence="4">
    <location>
        <position position="796"/>
    </location>
</feature>
<feature type="glycosylation site" description="N-linked (GlcNAc...) asparagine" evidence="4">
    <location>
        <position position="811"/>
    </location>
</feature>
<feature type="glycosylation site" description="N-linked (GlcNAc...) asparagine" evidence="4">
    <location>
        <position position="866"/>
    </location>
</feature>
<feature type="glycosylation site" description="N-linked (GlcNAc...) asparagine" evidence="4">
    <location>
        <position position="937"/>
    </location>
</feature>
<evidence type="ECO:0000250" key="1">
    <source>
        <dbReference type="UniProtKB" id="P38244"/>
    </source>
</evidence>
<evidence type="ECO:0000250" key="2">
    <source>
        <dbReference type="UniProtKB" id="P80561"/>
    </source>
</evidence>
<evidence type="ECO:0000255" key="3"/>
<evidence type="ECO:0000255" key="4">
    <source>
        <dbReference type="PROSITE-ProRule" id="PRU00498"/>
    </source>
</evidence>
<evidence type="ECO:0000256" key="5">
    <source>
        <dbReference type="SAM" id="MobiDB-lite"/>
    </source>
</evidence>
<evidence type="ECO:0000305" key="6"/>
<dbReference type="EC" id="3.4.-.-" evidence="6"/>
<dbReference type="EMBL" id="CH408048">
    <property type="protein sequence ID" value="EDV12028.1"/>
    <property type="molecule type" value="Genomic_DNA"/>
</dbReference>
<dbReference type="SMR" id="B3LN75"/>
<dbReference type="HOGENOM" id="CLU_006412_1_0_1"/>
<dbReference type="OrthoDB" id="36254at4893"/>
<dbReference type="Proteomes" id="UP000008335">
    <property type="component" value="Unassembled WGS sequence"/>
</dbReference>
<dbReference type="GO" id="GO:0005774">
    <property type="term" value="C:vacuolar membrane"/>
    <property type="evidence" value="ECO:0007669"/>
    <property type="project" value="UniProtKB-SubCell"/>
</dbReference>
<dbReference type="GO" id="GO:0046872">
    <property type="term" value="F:metal ion binding"/>
    <property type="evidence" value="ECO:0007669"/>
    <property type="project" value="UniProtKB-KW"/>
</dbReference>
<dbReference type="GO" id="GO:0008235">
    <property type="term" value="F:metalloexopeptidase activity"/>
    <property type="evidence" value="ECO:0007669"/>
    <property type="project" value="InterPro"/>
</dbReference>
<dbReference type="GO" id="GO:0006508">
    <property type="term" value="P:proteolysis"/>
    <property type="evidence" value="ECO:0007669"/>
    <property type="project" value="UniProtKB-KW"/>
</dbReference>
<dbReference type="CDD" id="cd03875">
    <property type="entry name" value="M28_Fxna_like"/>
    <property type="match status" value="1"/>
</dbReference>
<dbReference type="FunFam" id="3.40.630.10:FF:000057">
    <property type="entry name" value="Vacuolar membrane protease"/>
    <property type="match status" value="1"/>
</dbReference>
<dbReference type="Gene3D" id="3.40.630.10">
    <property type="entry name" value="Zn peptidases"/>
    <property type="match status" value="1"/>
</dbReference>
<dbReference type="InterPro" id="IPR048024">
    <property type="entry name" value="Fxna-like_M28_dom"/>
</dbReference>
<dbReference type="InterPro" id="IPR045175">
    <property type="entry name" value="M28_fam"/>
</dbReference>
<dbReference type="InterPro" id="IPR007484">
    <property type="entry name" value="Peptidase_M28"/>
</dbReference>
<dbReference type="InterPro" id="IPR053975">
    <property type="entry name" value="PFF1_C"/>
</dbReference>
<dbReference type="InterPro" id="IPR053976">
    <property type="entry name" value="PFF1_TM"/>
</dbReference>
<dbReference type="PANTHER" id="PTHR12147">
    <property type="entry name" value="METALLOPEPTIDASE M28 FAMILY MEMBER"/>
    <property type="match status" value="1"/>
</dbReference>
<dbReference type="PANTHER" id="PTHR12147:SF58">
    <property type="entry name" value="VACUOLAR MEMBRANE PROTEASE"/>
    <property type="match status" value="1"/>
</dbReference>
<dbReference type="Pfam" id="PF04389">
    <property type="entry name" value="Peptidase_M28"/>
    <property type="match status" value="1"/>
</dbReference>
<dbReference type="Pfam" id="PF22250">
    <property type="entry name" value="PFF1_C"/>
    <property type="match status" value="1"/>
</dbReference>
<dbReference type="Pfam" id="PF22251">
    <property type="entry name" value="PFF1_TM"/>
    <property type="match status" value="1"/>
</dbReference>
<dbReference type="SUPFAM" id="SSF53187">
    <property type="entry name" value="Zn-dependent exopeptidases"/>
    <property type="match status" value="1"/>
</dbReference>
<gene>
    <name type="ORF">SCRG_02892</name>
</gene>
<protein>
    <recommendedName>
        <fullName evidence="1">Vacuolar membrane protease</fullName>
        <ecNumber evidence="6">3.4.-.-</ecNumber>
    </recommendedName>
    <alternativeName>
        <fullName evidence="1">FXNA-related family protease 1</fullName>
    </alternativeName>
</protein>
<keyword id="KW-0325">Glycoprotein</keyword>
<keyword id="KW-0378">Hydrolase</keyword>
<keyword id="KW-0472">Membrane</keyword>
<keyword id="KW-0479">Metal-binding</keyword>
<keyword id="KW-0482">Metalloprotease</keyword>
<keyword id="KW-0645">Protease</keyword>
<keyword id="KW-0812">Transmembrane</keyword>
<keyword id="KW-1133">Transmembrane helix</keyword>
<keyword id="KW-0926">Vacuole</keyword>
<keyword id="KW-0862">Zinc</keyword>
<name>PFF1_YEAS1</name>
<accession>B3LN75</accession>
<organism>
    <name type="scientific">Saccharomyces cerevisiae (strain RM11-1a)</name>
    <name type="common">Baker's yeast</name>
    <dbReference type="NCBI Taxonomy" id="285006"/>
    <lineage>
        <taxon>Eukaryota</taxon>
        <taxon>Fungi</taxon>
        <taxon>Dikarya</taxon>
        <taxon>Ascomycota</taxon>
        <taxon>Saccharomycotina</taxon>
        <taxon>Saccharomycetes</taxon>
        <taxon>Saccharomycetales</taxon>
        <taxon>Saccharomycetaceae</taxon>
        <taxon>Saccharomyces</taxon>
    </lineage>
</organism>
<sequence>MKLKSVFRSVLKYRKTNLSLLLLITYSIITLLYIFDHERYKLNLPKEDEHPEFNDLLETAWGDLQIITASFHPYTSKENDKVHDYLLKRVLEITGNSSFASVSDDKESERSILFQQQDPFNESSRFSRVTYFESSNILVKLEGKNPEEEGLLLSAHFDSVPTGYGATDDGMGVVSLLANLKYHIKHRPNRTLIFNFNNNEEFGLLGASTYFNHSWSNLTKYVINLEGTGAGGKAVLFRTSDTSTAKIYQQSVKENPFGNSIYQQGFYSRYVRSETDYKIYEENGMRGWDVAFYKPRNLYHTIKDSIQYTSKASLWHMLHTSLQLSAYVASNSLDTADQMPACYFDFIGLKFFVISAKTLFYWNCIFLLVSPVVAIGLYLISRDRMTWKSHSWLSWTRFPLSLAAGIIVQKLFSNDIIRSNPLTFSRNYFWPISAFFTQVIFTSYVLINCSNFFFPCADMKSLSIIELFIILWTILLFTSKLLYSSDYRYTGLYPLSIFFLLSTIAAILRLLALALGMRTRKRLGRECRDHHSNYSSHSQIDMERDGQENLEQPQDQFTSSQDDQASIQDDNVSTTSAGPSHNVDEDHGMDSSSQQHDERVPLLKGSNSMEEGLSTRENSLKLEYTDYAWIIQFLLIVPIPSFILFNSVDVIMDALNHTVQEGSKATFDVLRFGMVGSILMALPILPFFYKVNYITISLTALLFLISASKTLLVHPFTNSNPLKVRFSQNIDLSQGNAASVHVLGREGNFLKPMLQDLPSIKYSSTHINCTSVTNGMELCMYDGMQPNLLSTNGNTNISSMAKVHVLHNNRNSTERSPYEPIVAELLLDVKENRACTLTFESRHQAKSPVREITVYQKKNSAPQKTNITKTIKSASGINELQLHKLDFDQETYHIGVQWFPKLLTDGNLEDDKLGTKDELSVSISCYWGEYDSESVVNGTAVRKIPAFDELINYAPLSFSFTNEQKGLVIVKDAIIL</sequence>
<proteinExistence type="inferred from homology"/>